<feature type="chain" id="PRO_0000278492" description="Meiotically up-regulated gene 60 protein">
    <location>
        <begin position="1"/>
        <end position="663"/>
    </location>
</feature>
<feature type="domain" description="KH">
    <location>
        <begin position="578"/>
        <end position="644"/>
    </location>
</feature>
<organism>
    <name type="scientific">Schizosaccharomyces pombe (strain 972 / ATCC 24843)</name>
    <name type="common">Fission yeast</name>
    <dbReference type="NCBI Taxonomy" id="284812"/>
    <lineage>
        <taxon>Eukaryota</taxon>
        <taxon>Fungi</taxon>
        <taxon>Dikarya</taxon>
        <taxon>Ascomycota</taxon>
        <taxon>Taphrinomycotina</taxon>
        <taxon>Schizosaccharomycetes</taxon>
        <taxon>Schizosaccharomycetales</taxon>
        <taxon>Schizosaccharomycetaceae</taxon>
        <taxon>Schizosaccharomyces</taxon>
    </lineage>
</organism>
<gene>
    <name type="primary">mug60</name>
    <name type="ORF">SPBC28E12.02</name>
    <name type="ORF">SPBC9B6.13</name>
</gene>
<name>MUG60_SCHPO</name>
<reference key="1">
    <citation type="journal article" date="2002" name="Nature">
        <title>The genome sequence of Schizosaccharomyces pombe.</title>
        <authorList>
            <person name="Wood V."/>
            <person name="Gwilliam R."/>
            <person name="Rajandream M.A."/>
            <person name="Lyne M.H."/>
            <person name="Lyne R."/>
            <person name="Stewart A."/>
            <person name="Sgouros J.G."/>
            <person name="Peat N."/>
            <person name="Hayles J."/>
            <person name="Baker S.G."/>
            <person name="Basham D."/>
            <person name="Bowman S."/>
            <person name="Brooks K."/>
            <person name="Brown D."/>
            <person name="Brown S."/>
            <person name="Chillingworth T."/>
            <person name="Churcher C.M."/>
            <person name="Collins M."/>
            <person name="Connor R."/>
            <person name="Cronin A."/>
            <person name="Davis P."/>
            <person name="Feltwell T."/>
            <person name="Fraser A."/>
            <person name="Gentles S."/>
            <person name="Goble A."/>
            <person name="Hamlin N."/>
            <person name="Harris D.E."/>
            <person name="Hidalgo J."/>
            <person name="Hodgson G."/>
            <person name="Holroyd S."/>
            <person name="Hornsby T."/>
            <person name="Howarth S."/>
            <person name="Huckle E.J."/>
            <person name="Hunt S."/>
            <person name="Jagels K."/>
            <person name="James K.D."/>
            <person name="Jones L."/>
            <person name="Jones M."/>
            <person name="Leather S."/>
            <person name="McDonald S."/>
            <person name="McLean J."/>
            <person name="Mooney P."/>
            <person name="Moule S."/>
            <person name="Mungall K.L."/>
            <person name="Murphy L.D."/>
            <person name="Niblett D."/>
            <person name="Odell C."/>
            <person name="Oliver K."/>
            <person name="O'Neil S."/>
            <person name="Pearson D."/>
            <person name="Quail M.A."/>
            <person name="Rabbinowitsch E."/>
            <person name="Rutherford K.M."/>
            <person name="Rutter S."/>
            <person name="Saunders D."/>
            <person name="Seeger K."/>
            <person name="Sharp S."/>
            <person name="Skelton J."/>
            <person name="Simmonds M.N."/>
            <person name="Squares R."/>
            <person name="Squares S."/>
            <person name="Stevens K."/>
            <person name="Taylor K."/>
            <person name="Taylor R.G."/>
            <person name="Tivey A."/>
            <person name="Walsh S.V."/>
            <person name="Warren T."/>
            <person name="Whitehead S."/>
            <person name="Woodward J.R."/>
            <person name="Volckaert G."/>
            <person name="Aert R."/>
            <person name="Robben J."/>
            <person name="Grymonprez B."/>
            <person name="Weltjens I."/>
            <person name="Vanstreels E."/>
            <person name="Rieger M."/>
            <person name="Schaefer M."/>
            <person name="Mueller-Auer S."/>
            <person name="Gabel C."/>
            <person name="Fuchs M."/>
            <person name="Duesterhoeft A."/>
            <person name="Fritzc C."/>
            <person name="Holzer E."/>
            <person name="Moestl D."/>
            <person name="Hilbert H."/>
            <person name="Borzym K."/>
            <person name="Langer I."/>
            <person name="Beck A."/>
            <person name="Lehrach H."/>
            <person name="Reinhardt R."/>
            <person name="Pohl T.M."/>
            <person name="Eger P."/>
            <person name="Zimmermann W."/>
            <person name="Wedler H."/>
            <person name="Wambutt R."/>
            <person name="Purnelle B."/>
            <person name="Goffeau A."/>
            <person name="Cadieu E."/>
            <person name="Dreano S."/>
            <person name="Gloux S."/>
            <person name="Lelaure V."/>
            <person name="Mottier S."/>
            <person name="Galibert F."/>
            <person name="Aves S.J."/>
            <person name="Xiang Z."/>
            <person name="Hunt C."/>
            <person name="Moore K."/>
            <person name="Hurst S.M."/>
            <person name="Lucas M."/>
            <person name="Rochet M."/>
            <person name="Gaillardin C."/>
            <person name="Tallada V.A."/>
            <person name="Garzon A."/>
            <person name="Thode G."/>
            <person name="Daga R.R."/>
            <person name="Cruzado L."/>
            <person name="Jimenez J."/>
            <person name="Sanchez M."/>
            <person name="del Rey F."/>
            <person name="Benito J."/>
            <person name="Dominguez A."/>
            <person name="Revuelta J.L."/>
            <person name="Moreno S."/>
            <person name="Armstrong J."/>
            <person name="Forsburg S.L."/>
            <person name="Cerutti L."/>
            <person name="Lowe T."/>
            <person name="McCombie W.R."/>
            <person name="Paulsen I."/>
            <person name="Potashkin J."/>
            <person name="Shpakovski G.V."/>
            <person name="Ussery D."/>
            <person name="Barrell B.G."/>
            <person name="Nurse P."/>
        </authorList>
    </citation>
    <scope>NUCLEOTIDE SEQUENCE [LARGE SCALE GENOMIC DNA]</scope>
    <source>
        <strain>972 / ATCC 24843</strain>
    </source>
</reference>
<reference key="2">
    <citation type="journal article" date="2005" name="Curr. Biol.">
        <title>A large-scale screen in S. pombe identifies seven novel genes required for critical meiotic events.</title>
        <authorList>
            <person name="Martin-Castellanos C."/>
            <person name="Blanco M."/>
            <person name="Rozalen A.E."/>
            <person name="Perez-Hidalgo L."/>
            <person name="Garcia A.I."/>
            <person name="Conde F."/>
            <person name="Mata J."/>
            <person name="Ellermeier C."/>
            <person name="Davis L."/>
            <person name="San-Segundo P."/>
            <person name="Smith G.R."/>
            <person name="Moreno S."/>
        </authorList>
    </citation>
    <scope>FUNCTION IN MEIOSIS</scope>
</reference>
<reference key="3">
    <citation type="journal article" date="2006" name="Nat. Biotechnol.">
        <title>ORFeome cloning and global analysis of protein localization in the fission yeast Schizosaccharomyces pombe.</title>
        <authorList>
            <person name="Matsuyama A."/>
            <person name="Arai R."/>
            <person name="Yashiroda Y."/>
            <person name="Shirai A."/>
            <person name="Kamata A."/>
            <person name="Sekido S."/>
            <person name="Kobayashi Y."/>
            <person name="Hashimoto A."/>
            <person name="Hamamoto M."/>
            <person name="Hiraoka Y."/>
            <person name="Horinouchi S."/>
            <person name="Yoshida M."/>
        </authorList>
    </citation>
    <scope>SUBCELLULAR LOCATION [LARGE SCALE ANALYSIS]</scope>
</reference>
<keyword id="KW-0963">Cytoplasm</keyword>
<keyword id="KW-0206">Cytoskeleton</keyword>
<keyword id="KW-0469">Meiosis</keyword>
<keyword id="KW-0539">Nucleus</keyword>
<keyword id="KW-1185">Reference proteome</keyword>
<keyword id="KW-0694">RNA-binding</keyword>
<comment type="function">
    <text evidence="1">Has a role in meiosis.</text>
</comment>
<comment type="subcellular location">
    <subcellularLocation>
        <location evidence="2">Cytoplasm</location>
    </subcellularLocation>
    <subcellularLocation>
        <location evidence="2">Nucleus</location>
    </subcellularLocation>
    <subcellularLocation>
        <location evidence="2">Cytoplasm</location>
        <location evidence="2">Cytoskeleton</location>
        <location evidence="2">Microtubule organizing center</location>
        <location evidence="2">Spindle pole body</location>
    </subcellularLocation>
</comment>
<accession>O74359</accession>
<proteinExistence type="evidence at protein level"/>
<protein>
    <recommendedName>
        <fullName>Meiotically up-regulated gene 60 protein</fullName>
    </recommendedName>
</protein>
<sequence>MDSHVLAFPIPDPSTPPPEEASLYASKCDYYESDIYSQIRRLTEEKCIETEKELPVNIKLHVKHKGMSISSSRNELVVTVSGNYKNVYTAKIKILQAIPKILISKLVLEEPLENLLFDEDGYVYEDTMKHLDKITEITGAKIYIMHRSMCHDIDFQLRTDSGFSNRLNEQQSFYQRHLESTRHEFSCQKNAENSFFIVFYGDYCSVEHARIRVLALMDEIRGLSVVAIATSVSFQPILVGKAFSSTAGMKATESINIYTLPFCSDSIPRLQTLPALNSSKIIITGEEEKLQRLEEAFYYAEEHLKLFTHVTEISFVKLFEFLAYEMDELRLIMEENSSFIRFPEYFKEGGETSPENSKVKIYSSSIANSEKTALRLAKLASKYVQGKTQFGVEDNEDFLRVAGSWRRASTIEKGVSSSELSSIVSSTGSIVETNGIGEKMSFSPLKKLSIPPTEFVAQIAIICMASGVEMLLKTNGIEYFGQENTVPIAMDKASKIFYKFGQSQWHQILLEAPTKDQDFISGKKNGKLDKVKQQCRFNLKNGDILFCPQSTSIFTVDIYSDELERVIKGMNTMLLEFPAEMHFYVPEEIHKKLIGFRGEQIQRVTKLYNSYIEFSTTPFDCYGHNVLIRTPSKFSENLWAVRSLFIKTAEGLGYDIPKYLFAN</sequence>
<dbReference type="EMBL" id="CU329671">
    <property type="protein sequence ID" value="CAB42374.1"/>
    <property type="molecule type" value="Genomic_DNA"/>
</dbReference>
<dbReference type="PIR" id="T40039">
    <property type="entry name" value="T40039"/>
</dbReference>
<dbReference type="RefSeq" id="NP_595755.1">
    <property type="nucleotide sequence ID" value="NM_001021655.2"/>
</dbReference>
<dbReference type="BioGRID" id="277105">
    <property type="interactions" value="15"/>
</dbReference>
<dbReference type="STRING" id="284812.O74359"/>
<dbReference type="PaxDb" id="4896-SPBC28E12.02.1"/>
<dbReference type="EnsemblFungi" id="SPBC28E12.02.1">
    <property type="protein sequence ID" value="SPBC28E12.02.1:pep"/>
    <property type="gene ID" value="SPBC28E12.02"/>
</dbReference>
<dbReference type="KEGG" id="spo:2540579"/>
<dbReference type="PomBase" id="SPBC28E12.02"/>
<dbReference type="VEuPathDB" id="FungiDB:SPBC28E12.02"/>
<dbReference type="eggNOG" id="KOG2208">
    <property type="taxonomic scope" value="Eukaryota"/>
</dbReference>
<dbReference type="HOGENOM" id="CLU_416281_0_0_1"/>
<dbReference type="InParanoid" id="O74359"/>
<dbReference type="OMA" id="FSENLWA"/>
<dbReference type="PhylomeDB" id="O74359"/>
<dbReference type="PRO" id="PR:O74359"/>
<dbReference type="Proteomes" id="UP000002485">
    <property type="component" value="Chromosome II"/>
</dbReference>
<dbReference type="GO" id="GO:0005829">
    <property type="term" value="C:cytosol"/>
    <property type="evidence" value="ECO:0007005"/>
    <property type="project" value="PomBase"/>
</dbReference>
<dbReference type="GO" id="GO:0005634">
    <property type="term" value="C:nucleus"/>
    <property type="evidence" value="ECO:0007005"/>
    <property type="project" value="PomBase"/>
</dbReference>
<dbReference type="GO" id="GO:0005816">
    <property type="term" value="C:spindle pole body"/>
    <property type="evidence" value="ECO:0007669"/>
    <property type="project" value="UniProtKB-SubCell"/>
</dbReference>
<dbReference type="GO" id="GO:0003723">
    <property type="term" value="F:RNA binding"/>
    <property type="evidence" value="ECO:0000255"/>
    <property type="project" value="PomBase"/>
</dbReference>
<dbReference type="GO" id="GO:0051321">
    <property type="term" value="P:meiotic cell cycle"/>
    <property type="evidence" value="ECO:0007669"/>
    <property type="project" value="UniProtKB-KW"/>
</dbReference>
<dbReference type="CDD" id="cd22453">
    <property type="entry name" value="KH-I_MUG60_like"/>
    <property type="match status" value="1"/>
</dbReference>
<dbReference type="InterPro" id="IPR056553">
    <property type="entry name" value="KH_Mug60-KHD4"/>
</dbReference>
<dbReference type="Pfam" id="PF24563">
    <property type="entry name" value="KH_Mug60-KHD4"/>
    <property type="match status" value="1"/>
</dbReference>
<evidence type="ECO:0000269" key="1">
    <source>
    </source>
</evidence>
<evidence type="ECO:0000269" key="2">
    <source>
    </source>
</evidence>